<keyword id="KW-0210">Decarboxylase</keyword>
<keyword id="KW-0456">Lyase</keyword>
<keyword id="KW-0663">Pyridoxal phosphate</keyword>
<keyword id="KW-1185">Reference proteome</keyword>
<sequence length="464" mass="52582">MPLHSKNAVRDDLLDDIYSSADLSLSMPKYKMPEQEHDPRHAYQVIHDELMMDGNSRQNLATFCQTWVEDEVHKLMDECIDKNMIDKDEYPQTAELESRCVHMLADLWNSPDAENTLGCSTTGSSEAAMLGGMALKWAWREKMKKLGKPTDKPNMICGPVQVCWHKFARYWDIELREIPMEGDRLIMTPEEVIKRCDENTIGVVPTLGVTFTCQYEPVKAVHEALDKLQEETGLDIPMHIDAASGGFLAPFCDPDLEWDFRLPRVKSINASGHKFGLSPLGVGWVIWRDASALHEDLIFNVNYLGGNMPTFALNFSRPGGQIVAQYYNFLRLGKEGYRKIHQACYDTAVYLSSEIEKLGMFEIIYDGKGGIPAMSWSLKEGVDPGFNLFDLSDRIRSRGWQIAAYAMPPKREDLVIMRILVRHGFSRDQADLLVADLKHCVEFFAKHPISHGSDELESSGFNHG</sequence>
<proteinExistence type="evidence at protein level"/>
<feature type="chain" id="PRO_0000440873" description="Glutamate decarboxylase">
    <location>
        <begin position="1"/>
        <end position="464"/>
    </location>
</feature>
<feature type="modified residue" description="N6-(pyridoxal phosphate)lysine" evidence="1">
    <location>
        <position position="274"/>
    </location>
</feature>
<name>GADA_ALIF1</name>
<organism>
    <name type="scientific">Aliivibrio fischeri (strain ATCC 700601 / ES114)</name>
    <name type="common">Vibrio fischeri</name>
    <dbReference type="NCBI Taxonomy" id="312309"/>
    <lineage>
        <taxon>Bacteria</taxon>
        <taxon>Pseudomonadati</taxon>
        <taxon>Pseudomonadota</taxon>
        <taxon>Gammaproteobacteria</taxon>
        <taxon>Vibrionales</taxon>
        <taxon>Vibrionaceae</taxon>
        <taxon>Aliivibrio</taxon>
    </lineage>
</organism>
<dbReference type="EC" id="4.1.1.15" evidence="2"/>
<dbReference type="EMBL" id="CP000020">
    <property type="protein sequence ID" value="AAW85559.1"/>
    <property type="molecule type" value="Genomic_DNA"/>
</dbReference>
<dbReference type="RefSeq" id="WP_011261695.1">
    <property type="nucleotide sequence ID" value="NZ_CAWLES010000001.1"/>
</dbReference>
<dbReference type="RefSeq" id="YP_204447.1">
    <property type="nucleotide sequence ID" value="NC_006840.2"/>
</dbReference>
<dbReference type="SMR" id="Q5E5Y7"/>
<dbReference type="STRING" id="312309.VF_1064"/>
<dbReference type="EnsemblBacteria" id="AAW85559">
    <property type="protein sequence ID" value="AAW85559"/>
    <property type="gene ID" value="VF_1064"/>
</dbReference>
<dbReference type="GeneID" id="54163736"/>
<dbReference type="KEGG" id="vfi:VF_1064"/>
<dbReference type="PATRIC" id="fig|312309.11.peg.1067"/>
<dbReference type="eggNOG" id="COG0076">
    <property type="taxonomic scope" value="Bacteria"/>
</dbReference>
<dbReference type="HOGENOM" id="CLU_019582_2_2_6"/>
<dbReference type="OrthoDB" id="9803665at2"/>
<dbReference type="Proteomes" id="UP000000537">
    <property type="component" value="Chromosome I"/>
</dbReference>
<dbReference type="GO" id="GO:0005829">
    <property type="term" value="C:cytosol"/>
    <property type="evidence" value="ECO:0007669"/>
    <property type="project" value="TreeGrafter"/>
</dbReference>
<dbReference type="GO" id="GO:0004351">
    <property type="term" value="F:glutamate decarboxylase activity"/>
    <property type="evidence" value="ECO:0000314"/>
    <property type="project" value="UniProtKB"/>
</dbReference>
<dbReference type="GO" id="GO:0030170">
    <property type="term" value="F:pyridoxal phosphate binding"/>
    <property type="evidence" value="ECO:0007669"/>
    <property type="project" value="InterPro"/>
</dbReference>
<dbReference type="GO" id="GO:0006538">
    <property type="term" value="P:glutamate catabolic process"/>
    <property type="evidence" value="ECO:0007669"/>
    <property type="project" value="TreeGrafter"/>
</dbReference>
<dbReference type="GO" id="GO:0006536">
    <property type="term" value="P:glutamate metabolic process"/>
    <property type="evidence" value="ECO:0000314"/>
    <property type="project" value="UniProtKB"/>
</dbReference>
<dbReference type="CDD" id="cd06450">
    <property type="entry name" value="DOPA_deC_like"/>
    <property type="match status" value="1"/>
</dbReference>
<dbReference type="FunFam" id="3.40.640.10:FF:000017">
    <property type="entry name" value="Glutamate decarboxylase"/>
    <property type="match status" value="1"/>
</dbReference>
<dbReference type="FunFam" id="3.90.1150.160:FF:000002">
    <property type="entry name" value="Glutamate decarboxylase"/>
    <property type="match status" value="1"/>
</dbReference>
<dbReference type="FunFam" id="4.10.280.50:FF:000001">
    <property type="entry name" value="Glutamate decarboxylase"/>
    <property type="match status" value="1"/>
</dbReference>
<dbReference type="Gene3D" id="3.90.1150.160">
    <property type="match status" value="1"/>
</dbReference>
<dbReference type="Gene3D" id="4.10.280.50">
    <property type="match status" value="1"/>
</dbReference>
<dbReference type="Gene3D" id="3.40.640.10">
    <property type="entry name" value="Type I PLP-dependent aspartate aminotransferase-like (Major domain)"/>
    <property type="match status" value="1"/>
</dbReference>
<dbReference type="InterPro" id="IPR010107">
    <property type="entry name" value="Glutamate_decarboxylase"/>
</dbReference>
<dbReference type="InterPro" id="IPR002129">
    <property type="entry name" value="PyrdxlP-dep_de-COase"/>
</dbReference>
<dbReference type="InterPro" id="IPR015424">
    <property type="entry name" value="PyrdxlP-dep_Trfase"/>
</dbReference>
<dbReference type="InterPro" id="IPR015421">
    <property type="entry name" value="PyrdxlP-dep_Trfase_major"/>
</dbReference>
<dbReference type="NCBIfam" id="TIGR01788">
    <property type="entry name" value="Glu-decarb-GAD"/>
    <property type="match status" value="1"/>
</dbReference>
<dbReference type="PANTHER" id="PTHR43321">
    <property type="entry name" value="GLUTAMATE DECARBOXYLASE"/>
    <property type="match status" value="1"/>
</dbReference>
<dbReference type="PANTHER" id="PTHR43321:SF3">
    <property type="entry name" value="GLUTAMATE DECARBOXYLASE"/>
    <property type="match status" value="1"/>
</dbReference>
<dbReference type="Pfam" id="PF00282">
    <property type="entry name" value="Pyridoxal_deC"/>
    <property type="match status" value="1"/>
</dbReference>
<dbReference type="SUPFAM" id="SSF53383">
    <property type="entry name" value="PLP-dependent transferases"/>
    <property type="match status" value="1"/>
</dbReference>
<accession>Q5E5Y7</accession>
<evidence type="ECO:0000250" key="1">
    <source>
        <dbReference type="UniProtKB" id="P80041"/>
    </source>
</evidence>
<evidence type="ECO:0000269" key="2">
    <source>
    </source>
</evidence>
<evidence type="ECO:0000303" key="3">
    <source>
    </source>
</evidence>
<evidence type="ECO:0000305" key="4"/>
<evidence type="ECO:0000312" key="5">
    <source>
        <dbReference type="EMBL" id="AAW85559.1"/>
    </source>
</evidence>
<reference key="1">
    <citation type="journal article" date="2005" name="Proc. Natl. Acad. Sci. U.S.A.">
        <title>Complete genome sequence of Vibrio fischeri: a symbiotic bacterium with pathogenic congeners.</title>
        <authorList>
            <person name="Ruby E.G."/>
            <person name="Urbanowski M."/>
            <person name="Campbell J."/>
            <person name="Dunn A."/>
            <person name="Faini M."/>
            <person name="Gunsalus R."/>
            <person name="Lostroh P."/>
            <person name="Lupp C."/>
            <person name="McCann J."/>
            <person name="Millikan D."/>
            <person name="Schaefer A."/>
            <person name="Stabb E."/>
            <person name="Stevens A."/>
            <person name="Visick K."/>
            <person name="Whistler C."/>
            <person name="Greenberg E.P."/>
        </authorList>
    </citation>
    <scope>NUCLEOTIDE SEQUENCE [LARGE SCALE GENOMIC DNA]</scope>
    <source>
        <strain>ATCC 700601 / ES114</strain>
    </source>
</reference>
<reference key="2">
    <citation type="journal article" date="2017" name="J. Biol. Chem.">
        <title>Model-enabled gene search (MEGS) allows fast and direct discovery of enzymatic and transport gene functions in the marine bacterium Vibrio fischeri.</title>
        <authorList>
            <person name="Pan S."/>
            <person name="Nikolakakis K."/>
            <person name="Adamczyk P.A."/>
            <person name="Pan M."/>
            <person name="Ruby E.G."/>
            <person name="Reed J.L."/>
        </authorList>
    </citation>
    <scope>FUNCTION</scope>
    <scope>CATALYTIC ACTIVITY</scope>
    <scope>COFACTOR</scope>
    <scope>BIOPHYSICOCHEMICAL PROPERTIES</scope>
    <source>
        <strain>ATCC 700601 / ES114</strain>
    </source>
</reference>
<gene>
    <name evidence="3" type="primary">gadA</name>
    <name evidence="5" type="ordered locus">VF_1064</name>
</gene>
<comment type="function">
    <text evidence="2">Catalyzes the pyridoxal-dependent decarboxylation of glutamate to produce 4-aminobutanoate. Has weak activity with aspartate, but cannot complement an E.coli panD deletion mutant.</text>
</comment>
<comment type="catalytic activity">
    <reaction evidence="2">
        <text>L-glutamate + H(+) = 4-aminobutanoate + CO2</text>
        <dbReference type="Rhea" id="RHEA:17785"/>
        <dbReference type="ChEBI" id="CHEBI:15378"/>
        <dbReference type="ChEBI" id="CHEBI:16526"/>
        <dbReference type="ChEBI" id="CHEBI:29985"/>
        <dbReference type="ChEBI" id="CHEBI:59888"/>
        <dbReference type="EC" id="4.1.1.15"/>
    </reaction>
</comment>
<comment type="cofactor">
    <cofactor evidence="2">
        <name>pyridoxal 5'-phosphate</name>
        <dbReference type="ChEBI" id="CHEBI:597326"/>
    </cofactor>
</comment>
<comment type="biophysicochemical properties">
    <kinetics>
        <KM evidence="2">61.7 mM for glutamate (at 37 degrees Celsius)</KM>
        <text evidence="2">kcat is 0.055 sec(-1) at 37 degrees Celsius.</text>
    </kinetics>
</comment>
<comment type="similarity">
    <text evidence="4">Belongs to the group II decarboxylase family.</text>
</comment>
<protein>
    <recommendedName>
        <fullName evidence="3">Glutamate decarboxylase</fullName>
        <ecNumber evidence="2">4.1.1.15</ecNumber>
    </recommendedName>
</protein>